<reference key="1">
    <citation type="journal article" date="2002" name="J. Hum. Genet.">
        <title>Identification of a novel human DDX40 gene, a new member of the DEAH-box protein family.</title>
        <authorList>
            <person name="Xu J."/>
            <person name="Wu H."/>
            <person name="Zhang C."/>
            <person name="Cao Y."/>
            <person name="Wang L."/>
            <person name="Zeng L."/>
            <person name="Ye X."/>
            <person name="Wu Q."/>
            <person name="Dai J."/>
            <person name="Xie Y."/>
            <person name="Mao Y."/>
        </authorList>
    </citation>
    <scope>NUCLEOTIDE SEQUENCE [MRNA] (ISOFORM 1)</scope>
    <scope>TISSUE SPECIFICITY</scope>
</reference>
<reference key="2">
    <citation type="submission" date="2000-04" db="EMBL/GenBank/DDBJ databases">
        <title>Five novel genes from 17q23 amplicon have different amplification and overexpression frequency in breast cancer.</title>
        <authorList>
            <person name="Wu G.-J."/>
            <person name="Couch F.J."/>
        </authorList>
    </citation>
    <scope>NUCLEOTIDE SEQUENCE [MRNA] (ISOFORM 2)</scope>
</reference>
<reference key="3">
    <citation type="journal article" date="2004" name="Nat. Genet.">
        <title>Complete sequencing and characterization of 21,243 full-length human cDNAs.</title>
        <authorList>
            <person name="Ota T."/>
            <person name="Suzuki Y."/>
            <person name="Nishikawa T."/>
            <person name="Otsuki T."/>
            <person name="Sugiyama T."/>
            <person name="Irie R."/>
            <person name="Wakamatsu A."/>
            <person name="Hayashi K."/>
            <person name="Sato H."/>
            <person name="Nagai K."/>
            <person name="Kimura K."/>
            <person name="Makita H."/>
            <person name="Sekine M."/>
            <person name="Obayashi M."/>
            <person name="Nishi T."/>
            <person name="Shibahara T."/>
            <person name="Tanaka T."/>
            <person name="Ishii S."/>
            <person name="Yamamoto J."/>
            <person name="Saito K."/>
            <person name="Kawai Y."/>
            <person name="Isono Y."/>
            <person name="Nakamura Y."/>
            <person name="Nagahari K."/>
            <person name="Murakami K."/>
            <person name="Yasuda T."/>
            <person name="Iwayanagi T."/>
            <person name="Wagatsuma M."/>
            <person name="Shiratori A."/>
            <person name="Sudo H."/>
            <person name="Hosoiri T."/>
            <person name="Kaku Y."/>
            <person name="Kodaira H."/>
            <person name="Kondo H."/>
            <person name="Sugawara M."/>
            <person name="Takahashi M."/>
            <person name="Kanda K."/>
            <person name="Yokoi T."/>
            <person name="Furuya T."/>
            <person name="Kikkawa E."/>
            <person name="Omura Y."/>
            <person name="Abe K."/>
            <person name="Kamihara K."/>
            <person name="Katsuta N."/>
            <person name="Sato K."/>
            <person name="Tanikawa M."/>
            <person name="Yamazaki M."/>
            <person name="Ninomiya K."/>
            <person name="Ishibashi T."/>
            <person name="Yamashita H."/>
            <person name="Murakawa K."/>
            <person name="Fujimori K."/>
            <person name="Tanai H."/>
            <person name="Kimata M."/>
            <person name="Watanabe M."/>
            <person name="Hiraoka S."/>
            <person name="Chiba Y."/>
            <person name="Ishida S."/>
            <person name="Ono Y."/>
            <person name="Takiguchi S."/>
            <person name="Watanabe S."/>
            <person name="Yosida M."/>
            <person name="Hotuta T."/>
            <person name="Kusano J."/>
            <person name="Kanehori K."/>
            <person name="Takahashi-Fujii A."/>
            <person name="Hara H."/>
            <person name="Tanase T.-O."/>
            <person name="Nomura Y."/>
            <person name="Togiya S."/>
            <person name="Komai F."/>
            <person name="Hara R."/>
            <person name="Takeuchi K."/>
            <person name="Arita M."/>
            <person name="Imose N."/>
            <person name="Musashino K."/>
            <person name="Yuuki H."/>
            <person name="Oshima A."/>
            <person name="Sasaki N."/>
            <person name="Aotsuka S."/>
            <person name="Yoshikawa Y."/>
            <person name="Matsunawa H."/>
            <person name="Ichihara T."/>
            <person name="Shiohata N."/>
            <person name="Sano S."/>
            <person name="Moriya S."/>
            <person name="Momiyama H."/>
            <person name="Satoh N."/>
            <person name="Takami S."/>
            <person name="Terashima Y."/>
            <person name="Suzuki O."/>
            <person name="Nakagawa S."/>
            <person name="Senoh A."/>
            <person name="Mizoguchi H."/>
            <person name="Goto Y."/>
            <person name="Shimizu F."/>
            <person name="Wakebe H."/>
            <person name="Hishigaki H."/>
            <person name="Watanabe T."/>
            <person name="Sugiyama A."/>
            <person name="Takemoto M."/>
            <person name="Kawakami B."/>
            <person name="Yamazaki M."/>
            <person name="Watanabe K."/>
            <person name="Kumagai A."/>
            <person name="Itakura S."/>
            <person name="Fukuzumi Y."/>
            <person name="Fujimori Y."/>
            <person name="Komiyama M."/>
            <person name="Tashiro H."/>
            <person name="Tanigami A."/>
            <person name="Fujiwara T."/>
            <person name="Ono T."/>
            <person name="Yamada K."/>
            <person name="Fujii Y."/>
            <person name="Ozaki K."/>
            <person name="Hirao M."/>
            <person name="Ohmori Y."/>
            <person name="Kawabata A."/>
            <person name="Hikiji T."/>
            <person name="Kobatake N."/>
            <person name="Inagaki H."/>
            <person name="Ikema Y."/>
            <person name="Okamoto S."/>
            <person name="Okitani R."/>
            <person name="Kawakami T."/>
            <person name="Noguchi S."/>
            <person name="Itoh T."/>
            <person name="Shigeta K."/>
            <person name="Senba T."/>
            <person name="Matsumura K."/>
            <person name="Nakajima Y."/>
            <person name="Mizuno T."/>
            <person name="Morinaga M."/>
            <person name="Sasaki M."/>
            <person name="Togashi T."/>
            <person name="Oyama M."/>
            <person name="Hata H."/>
            <person name="Watanabe M."/>
            <person name="Komatsu T."/>
            <person name="Mizushima-Sugano J."/>
            <person name="Satoh T."/>
            <person name="Shirai Y."/>
            <person name="Takahashi Y."/>
            <person name="Nakagawa K."/>
            <person name="Okumura K."/>
            <person name="Nagase T."/>
            <person name="Nomura N."/>
            <person name="Kikuchi H."/>
            <person name="Masuho Y."/>
            <person name="Yamashita R."/>
            <person name="Nakai K."/>
            <person name="Yada T."/>
            <person name="Nakamura Y."/>
            <person name="Ohara O."/>
            <person name="Isogai T."/>
            <person name="Sugano S."/>
        </authorList>
    </citation>
    <scope>NUCLEOTIDE SEQUENCE [LARGE SCALE MRNA] (ISOFORM 1)</scope>
    <source>
        <tissue>Brain</tissue>
    </source>
</reference>
<reference key="4">
    <citation type="journal article" date="2006" name="Nature">
        <title>DNA sequence of human chromosome 17 and analysis of rearrangement in the human lineage.</title>
        <authorList>
            <person name="Zody M.C."/>
            <person name="Garber M."/>
            <person name="Adams D.J."/>
            <person name="Sharpe T."/>
            <person name="Harrow J."/>
            <person name="Lupski J.R."/>
            <person name="Nicholson C."/>
            <person name="Searle S.M."/>
            <person name="Wilming L."/>
            <person name="Young S.K."/>
            <person name="Abouelleil A."/>
            <person name="Allen N.R."/>
            <person name="Bi W."/>
            <person name="Bloom T."/>
            <person name="Borowsky M.L."/>
            <person name="Bugalter B.E."/>
            <person name="Butler J."/>
            <person name="Chang J.L."/>
            <person name="Chen C.-K."/>
            <person name="Cook A."/>
            <person name="Corum B."/>
            <person name="Cuomo C.A."/>
            <person name="de Jong P.J."/>
            <person name="DeCaprio D."/>
            <person name="Dewar K."/>
            <person name="FitzGerald M."/>
            <person name="Gilbert J."/>
            <person name="Gibson R."/>
            <person name="Gnerre S."/>
            <person name="Goldstein S."/>
            <person name="Grafham D.V."/>
            <person name="Grocock R."/>
            <person name="Hafez N."/>
            <person name="Hagopian D.S."/>
            <person name="Hart E."/>
            <person name="Norman C.H."/>
            <person name="Humphray S."/>
            <person name="Jaffe D.B."/>
            <person name="Jones M."/>
            <person name="Kamal M."/>
            <person name="Khodiyar V.K."/>
            <person name="LaButti K."/>
            <person name="Laird G."/>
            <person name="Lehoczky J."/>
            <person name="Liu X."/>
            <person name="Lokyitsang T."/>
            <person name="Loveland J."/>
            <person name="Lui A."/>
            <person name="Macdonald P."/>
            <person name="Major J.E."/>
            <person name="Matthews L."/>
            <person name="Mauceli E."/>
            <person name="McCarroll S.A."/>
            <person name="Mihalev A.H."/>
            <person name="Mudge J."/>
            <person name="Nguyen C."/>
            <person name="Nicol R."/>
            <person name="O'Leary S.B."/>
            <person name="Osoegawa K."/>
            <person name="Schwartz D.C."/>
            <person name="Shaw-Smith C."/>
            <person name="Stankiewicz P."/>
            <person name="Steward C."/>
            <person name="Swarbreck D."/>
            <person name="Venkataraman V."/>
            <person name="Whittaker C.A."/>
            <person name="Yang X."/>
            <person name="Zimmer A.R."/>
            <person name="Bradley A."/>
            <person name="Hubbard T."/>
            <person name="Birren B.W."/>
            <person name="Rogers J."/>
            <person name="Lander E.S."/>
            <person name="Nusbaum C."/>
        </authorList>
    </citation>
    <scope>NUCLEOTIDE SEQUENCE [LARGE SCALE GENOMIC DNA]</scope>
</reference>
<reference key="5">
    <citation type="journal article" date="2004" name="Genome Res.">
        <title>The status, quality, and expansion of the NIH full-length cDNA project: the Mammalian Gene Collection (MGC).</title>
        <authorList>
            <consortium name="The MGC Project Team"/>
        </authorList>
    </citation>
    <scope>NUCLEOTIDE SEQUENCE [LARGE SCALE MRNA] (ISOFORM 1)</scope>
    <source>
        <tissue>Testis</tissue>
    </source>
</reference>
<reference key="6">
    <citation type="journal article" date="2007" name="BMC Genomics">
        <title>The full-ORF clone resource of the German cDNA consortium.</title>
        <authorList>
            <person name="Bechtel S."/>
            <person name="Rosenfelder H."/>
            <person name="Duda A."/>
            <person name="Schmidt C.P."/>
            <person name="Ernst U."/>
            <person name="Wellenreuther R."/>
            <person name="Mehrle A."/>
            <person name="Schuster C."/>
            <person name="Bahr A."/>
            <person name="Bloecker H."/>
            <person name="Heubner D."/>
            <person name="Hoerlein A."/>
            <person name="Michel G."/>
            <person name="Wedler H."/>
            <person name="Koehrer K."/>
            <person name="Ottenwaelder B."/>
            <person name="Poustka A."/>
            <person name="Wiemann S."/>
            <person name="Schupp I."/>
        </authorList>
    </citation>
    <scope>NUCLEOTIDE SEQUENCE [LARGE SCALE MRNA] OF 213-779</scope>
    <source>
        <tissue>Lymph node</tissue>
    </source>
</reference>
<reference key="7">
    <citation type="submission" date="2000-11" db="EMBL/GenBank/DDBJ databases">
        <title>Gene cloning of human adenocarcinoma cell line.</title>
        <authorList>
            <person name="Yanqiu Z."/>
            <person name="Huazhang A."/>
            <person name="Fei L."/>
            <person name="Yongquan S."/>
            <person name="Xin W."/>
            <person name="Taidong Q."/>
            <person name="Baojun C."/>
            <person name="Kaichun W."/>
            <person name="Jie D."/>
            <person name="Daiming F."/>
        </authorList>
    </citation>
    <scope>NUCLEOTIDE SEQUENCE [MRNA] OF 327-779 (ISOFORM 3)</scope>
    <source>
        <tissue>Stomach cancer</tissue>
    </source>
</reference>
<reference key="8">
    <citation type="journal article" date="2011" name="BMC Syst. Biol.">
        <title>Initial characterization of the human central proteome.</title>
        <authorList>
            <person name="Burkard T.R."/>
            <person name="Planyavsky M."/>
            <person name="Kaupe I."/>
            <person name="Breitwieser F.P."/>
            <person name="Buerckstuemmer T."/>
            <person name="Bennett K.L."/>
            <person name="Superti-Furga G."/>
            <person name="Colinge J."/>
        </authorList>
    </citation>
    <scope>IDENTIFICATION BY MASS SPECTROMETRY [LARGE SCALE ANALYSIS]</scope>
</reference>
<name>DHX40_HUMAN</name>
<organism>
    <name type="scientific">Homo sapiens</name>
    <name type="common">Human</name>
    <dbReference type="NCBI Taxonomy" id="9606"/>
    <lineage>
        <taxon>Eukaryota</taxon>
        <taxon>Metazoa</taxon>
        <taxon>Chordata</taxon>
        <taxon>Craniata</taxon>
        <taxon>Vertebrata</taxon>
        <taxon>Euteleostomi</taxon>
        <taxon>Mammalia</taxon>
        <taxon>Eutheria</taxon>
        <taxon>Euarchontoglires</taxon>
        <taxon>Primates</taxon>
        <taxon>Haplorrhini</taxon>
        <taxon>Catarrhini</taxon>
        <taxon>Hominidae</taxon>
        <taxon>Homo</taxon>
    </lineage>
</organism>
<protein>
    <recommendedName>
        <fullName>Probable ATP-dependent RNA helicase DHX40</fullName>
        <ecNumber>3.6.4.13</ecNumber>
    </recommendedName>
    <alternativeName>
        <fullName>DEAH box protein 40</fullName>
    </alternativeName>
    <alternativeName>
        <fullName>Protein PAD</fullName>
    </alternativeName>
</protein>
<dbReference type="EC" id="3.6.4.13"/>
<dbReference type="EMBL" id="AF461690">
    <property type="protein sequence ID" value="AAN77932.1"/>
    <property type="molecule type" value="mRNA"/>
</dbReference>
<dbReference type="EMBL" id="AF260270">
    <property type="protein sequence ID" value="AAF70326.1"/>
    <property type="status" value="ALT_FRAME"/>
    <property type="molecule type" value="mRNA"/>
</dbReference>
<dbReference type="EMBL" id="AK025713">
    <property type="protein sequence ID" value="BAB15226.1"/>
    <property type="status" value="ALT_INIT"/>
    <property type="molecule type" value="mRNA"/>
</dbReference>
<dbReference type="EMBL" id="AK095681">
    <property type="protein sequence ID" value="BAG53107.1"/>
    <property type="molecule type" value="mRNA"/>
</dbReference>
<dbReference type="EMBL" id="AC004167">
    <property type="status" value="NOT_ANNOTATED_CDS"/>
    <property type="molecule type" value="Genomic_DNA"/>
</dbReference>
<dbReference type="EMBL" id="AC091271">
    <property type="status" value="NOT_ANNOTATED_CDS"/>
    <property type="molecule type" value="Genomic_DNA"/>
</dbReference>
<dbReference type="EMBL" id="BC024187">
    <property type="protein sequence ID" value="AAH24187.1"/>
    <property type="molecule type" value="mRNA"/>
</dbReference>
<dbReference type="EMBL" id="AL832510">
    <property type="protein sequence ID" value="CAI46197.1"/>
    <property type="molecule type" value="mRNA"/>
</dbReference>
<dbReference type="EMBL" id="AF319521">
    <property type="protein sequence ID" value="AAK32122.1"/>
    <property type="status" value="ALT_INIT"/>
    <property type="molecule type" value="mRNA"/>
</dbReference>
<dbReference type="CCDS" id="CCDS11617.1">
    <molecule id="Q8IX18-1"/>
</dbReference>
<dbReference type="CCDS" id="CCDS54150.1">
    <molecule id="Q8IX18-4"/>
</dbReference>
<dbReference type="RefSeq" id="NP_001159773.1">
    <molecule id="Q8IX18-4"/>
    <property type="nucleotide sequence ID" value="NM_001166301.2"/>
</dbReference>
<dbReference type="RefSeq" id="NP_078888.4">
    <molecule id="Q8IX18-1"/>
    <property type="nucleotide sequence ID" value="NM_024612.4"/>
</dbReference>
<dbReference type="SMR" id="Q8IX18"/>
<dbReference type="BioGRID" id="122790">
    <property type="interactions" value="254"/>
</dbReference>
<dbReference type="FunCoup" id="Q8IX18">
    <property type="interactions" value="749"/>
</dbReference>
<dbReference type="IntAct" id="Q8IX18">
    <property type="interactions" value="45"/>
</dbReference>
<dbReference type="MINT" id="Q8IX18"/>
<dbReference type="STRING" id="9606.ENSP00000251241"/>
<dbReference type="BindingDB" id="Q8IX18"/>
<dbReference type="ChEMBL" id="CHEMBL5465330"/>
<dbReference type="iPTMnet" id="Q8IX18"/>
<dbReference type="PhosphoSitePlus" id="Q8IX18"/>
<dbReference type="BioMuta" id="DHX40"/>
<dbReference type="DMDM" id="116247771"/>
<dbReference type="jPOST" id="Q8IX18"/>
<dbReference type="MassIVE" id="Q8IX18"/>
<dbReference type="PaxDb" id="9606-ENSP00000251241"/>
<dbReference type="PeptideAtlas" id="Q8IX18"/>
<dbReference type="ProteomicsDB" id="11330"/>
<dbReference type="ProteomicsDB" id="70964">
    <molecule id="Q8IX18-1"/>
</dbReference>
<dbReference type="ProteomicsDB" id="70965">
    <molecule id="Q8IX18-2"/>
</dbReference>
<dbReference type="ProteomicsDB" id="70966">
    <molecule id="Q8IX18-3"/>
</dbReference>
<dbReference type="Pumba" id="Q8IX18"/>
<dbReference type="Antibodypedia" id="52618">
    <property type="antibodies" value="28 antibodies from 12 providers"/>
</dbReference>
<dbReference type="DNASU" id="79665"/>
<dbReference type="Ensembl" id="ENST00000251241.9">
    <molecule id="Q8IX18-1"/>
    <property type="protein sequence ID" value="ENSP00000251241.4"/>
    <property type="gene ID" value="ENSG00000108406.10"/>
</dbReference>
<dbReference type="Ensembl" id="ENST00000425628.7">
    <molecule id="Q8IX18-4"/>
    <property type="protein sequence ID" value="ENSP00000388749.3"/>
    <property type="gene ID" value="ENSG00000108406.10"/>
</dbReference>
<dbReference type="GeneID" id="79665"/>
<dbReference type="KEGG" id="hsa:79665"/>
<dbReference type="MANE-Select" id="ENST00000251241.9">
    <property type="protein sequence ID" value="ENSP00000251241.4"/>
    <property type="RefSeq nucleotide sequence ID" value="NM_024612.5"/>
    <property type="RefSeq protein sequence ID" value="NP_078888.4"/>
</dbReference>
<dbReference type="UCSC" id="uc002ixn.3">
    <molecule id="Q8IX18-1"/>
    <property type="organism name" value="human"/>
</dbReference>
<dbReference type="AGR" id="HGNC:18018"/>
<dbReference type="CTD" id="79665"/>
<dbReference type="DisGeNET" id="79665"/>
<dbReference type="GeneCards" id="DHX40"/>
<dbReference type="HGNC" id="HGNC:18018">
    <property type="gene designation" value="DHX40"/>
</dbReference>
<dbReference type="HPA" id="ENSG00000108406">
    <property type="expression patterns" value="Low tissue specificity"/>
</dbReference>
<dbReference type="MIM" id="607570">
    <property type="type" value="gene"/>
</dbReference>
<dbReference type="neXtProt" id="NX_Q8IX18"/>
<dbReference type="OpenTargets" id="ENSG00000108406"/>
<dbReference type="PharmGKB" id="PA27227"/>
<dbReference type="VEuPathDB" id="HostDB:ENSG00000108406"/>
<dbReference type="eggNOG" id="KOG0922">
    <property type="taxonomic scope" value="Eukaryota"/>
</dbReference>
<dbReference type="GeneTree" id="ENSGT00940000158902"/>
<dbReference type="HOGENOM" id="CLU_001832_5_11_1"/>
<dbReference type="InParanoid" id="Q8IX18"/>
<dbReference type="OMA" id="VTSKPFM"/>
<dbReference type="OrthoDB" id="10253254at2759"/>
<dbReference type="PAN-GO" id="Q8IX18">
    <property type="GO annotations" value="2 GO annotations based on evolutionary models"/>
</dbReference>
<dbReference type="PhylomeDB" id="Q8IX18"/>
<dbReference type="TreeFam" id="TF332290"/>
<dbReference type="PathwayCommons" id="Q8IX18"/>
<dbReference type="SignaLink" id="Q8IX18"/>
<dbReference type="BioGRID-ORCS" id="79665">
    <property type="hits" value="19 hits in 1155 CRISPR screens"/>
</dbReference>
<dbReference type="ChiTaRS" id="DHX40">
    <property type="organism name" value="human"/>
</dbReference>
<dbReference type="GenomeRNAi" id="79665"/>
<dbReference type="Pharos" id="Q8IX18">
    <property type="development level" value="Tdark"/>
</dbReference>
<dbReference type="PRO" id="PR:Q8IX18"/>
<dbReference type="Proteomes" id="UP000005640">
    <property type="component" value="Chromosome 17"/>
</dbReference>
<dbReference type="RNAct" id="Q8IX18">
    <property type="molecule type" value="protein"/>
</dbReference>
<dbReference type="Bgee" id="ENSG00000108406">
    <property type="expression patterns" value="Expressed in ventricular zone and 216 other cell types or tissues"/>
</dbReference>
<dbReference type="ExpressionAtlas" id="Q8IX18">
    <property type="expression patterns" value="baseline and differential"/>
</dbReference>
<dbReference type="GO" id="GO:0005681">
    <property type="term" value="C:spliceosomal complex"/>
    <property type="evidence" value="ECO:0000318"/>
    <property type="project" value="GO_Central"/>
</dbReference>
<dbReference type="GO" id="GO:0034458">
    <property type="term" value="F:3'-5' RNA helicase activity"/>
    <property type="evidence" value="ECO:0000318"/>
    <property type="project" value="GO_Central"/>
</dbReference>
<dbReference type="GO" id="GO:0005524">
    <property type="term" value="F:ATP binding"/>
    <property type="evidence" value="ECO:0007669"/>
    <property type="project" value="UniProtKB-KW"/>
</dbReference>
<dbReference type="GO" id="GO:0016887">
    <property type="term" value="F:ATP hydrolysis activity"/>
    <property type="evidence" value="ECO:0007669"/>
    <property type="project" value="RHEA"/>
</dbReference>
<dbReference type="GO" id="GO:0003723">
    <property type="term" value="F:RNA binding"/>
    <property type="evidence" value="ECO:0000318"/>
    <property type="project" value="GO_Central"/>
</dbReference>
<dbReference type="GO" id="GO:0000398">
    <property type="term" value="P:mRNA splicing, via spliceosome"/>
    <property type="evidence" value="ECO:0000318"/>
    <property type="project" value="GO_Central"/>
</dbReference>
<dbReference type="CDD" id="cd17984">
    <property type="entry name" value="DEXHc_DHX40"/>
    <property type="match status" value="1"/>
</dbReference>
<dbReference type="CDD" id="cd18791">
    <property type="entry name" value="SF2_C_RHA"/>
    <property type="match status" value="1"/>
</dbReference>
<dbReference type="FunFam" id="1.20.120.1080:FF:000009">
    <property type="entry name" value="Probable ATP-dependent RNA helicase DHX40"/>
    <property type="match status" value="1"/>
</dbReference>
<dbReference type="FunFam" id="3.40.50.300:FF:000145">
    <property type="entry name" value="probable ATP-dependent RNA helicase DHX40"/>
    <property type="match status" value="1"/>
</dbReference>
<dbReference type="FunFam" id="3.40.50.300:FF:001082">
    <property type="entry name" value="probable ATP-dependent RNA helicase DHX40"/>
    <property type="match status" value="1"/>
</dbReference>
<dbReference type="Gene3D" id="1.20.120.1080">
    <property type="match status" value="1"/>
</dbReference>
<dbReference type="Gene3D" id="3.40.50.300">
    <property type="entry name" value="P-loop containing nucleotide triphosphate hydrolases"/>
    <property type="match status" value="2"/>
</dbReference>
<dbReference type="InterPro" id="IPR011709">
    <property type="entry name" value="DEAD-box_helicase_OB_fold"/>
</dbReference>
<dbReference type="InterPro" id="IPR011545">
    <property type="entry name" value="DEAD/DEAH_box_helicase_dom"/>
</dbReference>
<dbReference type="InterPro" id="IPR002464">
    <property type="entry name" value="DNA/RNA_helicase_DEAH_CS"/>
</dbReference>
<dbReference type="InterPro" id="IPR048333">
    <property type="entry name" value="HA2_WH"/>
</dbReference>
<dbReference type="InterPro" id="IPR007502">
    <property type="entry name" value="Helicase-assoc_dom"/>
</dbReference>
<dbReference type="InterPro" id="IPR014001">
    <property type="entry name" value="Helicase_ATP-bd"/>
</dbReference>
<dbReference type="InterPro" id="IPR001650">
    <property type="entry name" value="Helicase_C-like"/>
</dbReference>
<dbReference type="InterPro" id="IPR027417">
    <property type="entry name" value="P-loop_NTPase"/>
</dbReference>
<dbReference type="PANTHER" id="PTHR18934">
    <property type="entry name" value="ATP-DEPENDENT RNA HELICASE"/>
    <property type="match status" value="1"/>
</dbReference>
<dbReference type="PANTHER" id="PTHR18934:SF271">
    <property type="entry name" value="ATP-DEPENDENT RNA HELICASE DHX40-RELATED"/>
    <property type="match status" value="1"/>
</dbReference>
<dbReference type="Pfam" id="PF00270">
    <property type="entry name" value="DEAD"/>
    <property type="match status" value="1"/>
</dbReference>
<dbReference type="Pfam" id="PF21010">
    <property type="entry name" value="HA2_C"/>
    <property type="match status" value="1"/>
</dbReference>
<dbReference type="Pfam" id="PF04408">
    <property type="entry name" value="HA2_N"/>
    <property type="match status" value="1"/>
</dbReference>
<dbReference type="Pfam" id="PF00271">
    <property type="entry name" value="Helicase_C"/>
    <property type="match status" value="1"/>
</dbReference>
<dbReference type="Pfam" id="PF07717">
    <property type="entry name" value="OB_NTP_bind"/>
    <property type="match status" value="1"/>
</dbReference>
<dbReference type="SMART" id="SM00487">
    <property type="entry name" value="DEXDc"/>
    <property type="match status" value="1"/>
</dbReference>
<dbReference type="SMART" id="SM00847">
    <property type="entry name" value="HA2"/>
    <property type="match status" value="1"/>
</dbReference>
<dbReference type="SMART" id="SM00490">
    <property type="entry name" value="HELICc"/>
    <property type="match status" value="1"/>
</dbReference>
<dbReference type="SUPFAM" id="SSF52540">
    <property type="entry name" value="P-loop containing nucleoside triphosphate hydrolases"/>
    <property type="match status" value="1"/>
</dbReference>
<dbReference type="PROSITE" id="PS00690">
    <property type="entry name" value="DEAH_ATP_HELICASE"/>
    <property type="match status" value="1"/>
</dbReference>
<dbReference type="PROSITE" id="PS51192">
    <property type="entry name" value="HELICASE_ATP_BIND_1"/>
    <property type="match status" value="1"/>
</dbReference>
<dbReference type="PROSITE" id="PS51194">
    <property type="entry name" value="HELICASE_CTER"/>
    <property type="match status" value="1"/>
</dbReference>
<sequence>MSRFPAVAGRAPRRQEEGERSRDLQEERLSAVCIADREEKGCTSQEGGTTPTFPIQKQRKKIIQAVRDNSFLIVTGNTGSGKTTQLPKYLYEAGFSQHGMIGVTQPRKVAAISVAQRVAEEMKCTLGSKVGYQVRFDDCSSKETAIKYMTDGCLLKHILGDPNLTKFSVIILDEAHERTLTTDILFGLLKKLFQEKSPNRKEHLKVVVMSATMELAKLSAFFGNCPIFDIPGRLYPVREKFCNLIGPRDRENTAYIQAIVKVTMDIHLNEMAGDILVFLTGQFEIEKSCELLFQMAESVDYDYDVQDTTLDGLLILPCYGSMTTDQQRRIFLPPPPGIRKCVISTNISATSLTIDGIRYVVDGGFVKQLNHNPRLGLDILEVVPISKSEALQRSGRAGRTSSGKCFRIYSKDFWNQCMPDHVIPEIKRTSLTSVVLTLKCLAIHDVIRFPYLDPPNERLILEALKQLYQCDAIDRSGHVTRLGLSMVEFPLPPHLTCAVIKAASLDCEDLLLPIAAMLSVENVFIRPVDPEYQKEAEQRHRELAAKAGGFNDFATLAVIFEQCKSSGAPASWCQKHWIHWRCLFSAFRVEAQLRELIRKLKQQSDFPKETFEGPKHEVLRRCLCAGYFKNVARRSVGRTFCTMDGRGSPVHIHPSSALHEQETKLEWIIFHEVLVTTKVYARIVCPIRYEWVRDLLPKLHEFNAHDLSSVARREVREDARRRWTNKENVKQLKDGISKDVLKKMQRRNDDKSISDARARFLERKQQRTQDHSDTRKETG</sequence>
<keyword id="KW-0025">Alternative splicing</keyword>
<keyword id="KW-0067">ATP-binding</keyword>
<keyword id="KW-0347">Helicase</keyword>
<keyword id="KW-0378">Hydrolase</keyword>
<keyword id="KW-0547">Nucleotide-binding</keyword>
<keyword id="KW-1267">Proteomics identification</keyword>
<keyword id="KW-1185">Reference proteome</keyword>
<comment type="function">
    <text evidence="1">Probable ATP-dependent RNA helicase.</text>
</comment>
<comment type="catalytic activity">
    <reaction>
        <text>ATP + H2O = ADP + phosphate + H(+)</text>
        <dbReference type="Rhea" id="RHEA:13065"/>
        <dbReference type="ChEBI" id="CHEBI:15377"/>
        <dbReference type="ChEBI" id="CHEBI:15378"/>
        <dbReference type="ChEBI" id="CHEBI:30616"/>
        <dbReference type="ChEBI" id="CHEBI:43474"/>
        <dbReference type="ChEBI" id="CHEBI:456216"/>
        <dbReference type="EC" id="3.6.4.13"/>
    </reaction>
</comment>
<comment type="interaction">
    <interactant intactId="EBI-2514301">
        <id>Q8IX18</id>
    </interactant>
    <interactant intactId="EBI-1050964">
        <id>O43586</id>
        <label>PSTPIP1</label>
    </interactant>
    <organismsDiffer>false</organismsDiffer>
    <experiments>3</experiments>
</comment>
<comment type="alternative products">
    <event type="alternative splicing"/>
    <isoform>
        <id>Q8IX18-1</id>
        <name>1</name>
        <sequence type="displayed"/>
    </isoform>
    <isoform>
        <id>Q8IX18-2</id>
        <name>2</name>
        <sequence type="described" ref="VSP_020932 VSP_020933"/>
    </isoform>
    <isoform>
        <id>Q8IX18-3</id>
        <name>3</name>
        <sequence type="described" ref="VSP_020934 VSP_020935"/>
    </isoform>
    <isoform>
        <id>Q8IX18-4</id>
        <name>4</name>
        <sequence type="described" ref="VSP_046973"/>
    </isoform>
</comment>
<comment type="tissue specificity">
    <text evidence="5">Ubiquitously expressed.</text>
</comment>
<comment type="similarity">
    <text evidence="8">Belongs to the DEAD box helicase family. DEAH subfamily.</text>
</comment>
<comment type="sequence caution" evidence="8">
    <conflict type="frameshift">
        <sequence resource="EMBL-CDS" id="AAF70326"/>
    </conflict>
</comment>
<comment type="sequence caution" evidence="8">
    <conflict type="erroneous initiation">
        <sequence resource="EMBL-CDS" id="AAK32122"/>
    </conflict>
</comment>
<comment type="sequence caution" evidence="8">
    <conflict type="erroneous initiation">
        <sequence resource="EMBL-CDS" id="BAB15226"/>
    </conflict>
</comment>
<evidence type="ECO:0000250" key="1"/>
<evidence type="ECO:0000255" key="2">
    <source>
        <dbReference type="PROSITE-ProRule" id="PRU00541"/>
    </source>
</evidence>
<evidence type="ECO:0000255" key="3">
    <source>
        <dbReference type="PROSITE-ProRule" id="PRU00542"/>
    </source>
</evidence>
<evidence type="ECO:0000256" key="4">
    <source>
        <dbReference type="SAM" id="MobiDB-lite"/>
    </source>
</evidence>
<evidence type="ECO:0000269" key="5">
    <source>
    </source>
</evidence>
<evidence type="ECO:0000303" key="6">
    <source ref="2"/>
</evidence>
<evidence type="ECO:0000303" key="7">
    <source ref="7"/>
</evidence>
<evidence type="ECO:0000305" key="8"/>
<feature type="chain" id="PRO_0000252395" description="Probable ATP-dependent RNA helicase DHX40">
    <location>
        <begin position="1"/>
        <end position="779"/>
    </location>
</feature>
<feature type="domain" description="Helicase ATP-binding" evidence="2">
    <location>
        <begin position="63"/>
        <end position="231"/>
    </location>
</feature>
<feature type="domain" description="Helicase C-terminal" evidence="3">
    <location>
        <begin position="263"/>
        <end position="442"/>
    </location>
</feature>
<feature type="region of interest" description="Disordered" evidence="4">
    <location>
        <begin position="1"/>
        <end position="28"/>
    </location>
</feature>
<feature type="region of interest" description="Disordered" evidence="4">
    <location>
        <begin position="737"/>
        <end position="779"/>
    </location>
</feature>
<feature type="short sequence motif" description="DEAH box">
    <location>
        <begin position="173"/>
        <end position="176"/>
    </location>
</feature>
<feature type="compositionally biased region" description="Basic and acidic residues" evidence="4">
    <location>
        <begin position="13"/>
        <end position="28"/>
    </location>
</feature>
<feature type="binding site" evidence="2">
    <location>
        <begin position="76"/>
        <end position="83"/>
    </location>
    <ligand>
        <name>ATP</name>
        <dbReference type="ChEBI" id="CHEBI:30616"/>
    </ligand>
</feature>
<feature type="splice variant" id="VSP_020932" description="In isoform 2." evidence="6">
    <location>
        <begin position="1"/>
        <end position="99"/>
    </location>
</feature>
<feature type="splice variant" id="VSP_046973" description="In isoform 4." evidence="8">
    <location>
        <begin position="66"/>
        <end position="142"/>
    </location>
</feature>
<feature type="splice variant" id="VSP_020933" description="In isoform 2." evidence="6">
    <original>Q</original>
    <variation>QQRRIFLPPPPGIRKCVISTNISATSLTIDGIRYVVDGGFVKQLNHNPRLGLE</variation>
    <location>
        <position position="326"/>
    </location>
</feature>
<feature type="splice variant" id="VSP_020934" description="In isoform 3." evidence="7">
    <original>REDARRR</original>
    <variation>MKIYYFQ</variation>
    <location>
        <begin position="716"/>
        <end position="722"/>
    </location>
</feature>
<feature type="splice variant" id="VSP_020935" description="In isoform 3." evidence="7">
    <location>
        <begin position="723"/>
        <end position="779"/>
    </location>
</feature>
<feature type="sequence conflict" description="In Ref. 1; AAN77932." evidence="8" ref="1">
    <original>K</original>
    <variation>E</variation>
    <location>
        <position position="261"/>
    </location>
</feature>
<feature type="sequence conflict" description="In Ref. 2; AAF70326." evidence="8" ref="2">
    <original>F</original>
    <variation>V</variation>
    <location>
        <position position="449"/>
    </location>
</feature>
<feature type="sequence conflict" description="In Ref. 1; AAN77932." evidence="8" ref="1">
    <original>M</original>
    <variation>V</variation>
    <location>
        <position position="643"/>
    </location>
</feature>
<feature type="sequence conflict" description="In Ref. 7; AAK32122." evidence="8" ref="7">
    <original>E</original>
    <variation>G</variation>
    <location>
        <position position="672"/>
    </location>
</feature>
<accession>Q8IX18</accession>
<accession>B3KTJ5</accession>
<accession>C9JR60</accession>
<accession>Q5JPH4</accession>
<accession>Q8TC86</accession>
<accession>Q8WY53</accession>
<accession>Q9BXM1</accession>
<accession>Q9H6M9</accession>
<gene>
    <name type="primary">DHX40</name>
    <name type="synonym">DDX40</name>
    <name type="ORF">ARG147</name>
</gene>
<proteinExistence type="evidence at protein level"/>